<keyword id="KW-0067">ATP-binding</keyword>
<keyword id="KW-0414">Isoprene biosynthesis</keyword>
<keyword id="KW-0418">Kinase</keyword>
<keyword id="KW-0547">Nucleotide-binding</keyword>
<keyword id="KW-0808">Transferase</keyword>
<organism>
    <name type="scientific">Bordetella bronchiseptica (strain ATCC BAA-588 / NCTC 13252 / RB50)</name>
    <name type="common">Alcaligenes bronchisepticus</name>
    <dbReference type="NCBI Taxonomy" id="257310"/>
    <lineage>
        <taxon>Bacteria</taxon>
        <taxon>Pseudomonadati</taxon>
        <taxon>Pseudomonadota</taxon>
        <taxon>Betaproteobacteria</taxon>
        <taxon>Burkholderiales</taxon>
        <taxon>Alcaligenaceae</taxon>
        <taxon>Bordetella</taxon>
    </lineage>
</organism>
<reference key="1">
    <citation type="journal article" date="2003" name="Nat. Genet.">
        <title>Comparative analysis of the genome sequences of Bordetella pertussis, Bordetella parapertussis and Bordetella bronchiseptica.</title>
        <authorList>
            <person name="Parkhill J."/>
            <person name="Sebaihia M."/>
            <person name="Preston A."/>
            <person name="Murphy L.D."/>
            <person name="Thomson N.R."/>
            <person name="Harris D.E."/>
            <person name="Holden M.T.G."/>
            <person name="Churcher C.M."/>
            <person name="Bentley S.D."/>
            <person name="Mungall K.L."/>
            <person name="Cerdeno-Tarraga A.-M."/>
            <person name="Temple L."/>
            <person name="James K.D."/>
            <person name="Harris B."/>
            <person name="Quail M.A."/>
            <person name="Achtman M."/>
            <person name="Atkin R."/>
            <person name="Baker S."/>
            <person name="Basham D."/>
            <person name="Bason N."/>
            <person name="Cherevach I."/>
            <person name="Chillingworth T."/>
            <person name="Collins M."/>
            <person name="Cronin A."/>
            <person name="Davis P."/>
            <person name="Doggett J."/>
            <person name="Feltwell T."/>
            <person name="Goble A."/>
            <person name="Hamlin N."/>
            <person name="Hauser H."/>
            <person name="Holroyd S."/>
            <person name="Jagels K."/>
            <person name="Leather S."/>
            <person name="Moule S."/>
            <person name="Norberczak H."/>
            <person name="O'Neil S."/>
            <person name="Ormond D."/>
            <person name="Price C."/>
            <person name="Rabbinowitsch E."/>
            <person name="Rutter S."/>
            <person name="Sanders M."/>
            <person name="Saunders D."/>
            <person name="Seeger K."/>
            <person name="Sharp S."/>
            <person name="Simmonds M."/>
            <person name="Skelton J."/>
            <person name="Squares R."/>
            <person name="Squares S."/>
            <person name="Stevens K."/>
            <person name="Unwin L."/>
            <person name="Whitehead S."/>
            <person name="Barrell B.G."/>
            <person name="Maskell D.J."/>
        </authorList>
    </citation>
    <scope>NUCLEOTIDE SEQUENCE [LARGE SCALE GENOMIC DNA]</scope>
    <source>
        <strain>ATCC BAA-588 / NCTC 13252 / RB50</strain>
    </source>
</reference>
<protein>
    <recommendedName>
        <fullName evidence="1">4-diphosphocytidyl-2-C-methyl-D-erythritol kinase</fullName>
        <shortName evidence="1">CMK</shortName>
        <ecNumber evidence="1">2.7.1.148</ecNumber>
    </recommendedName>
    <alternativeName>
        <fullName evidence="1">4-(cytidine-5'-diphospho)-2-C-methyl-D-erythritol kinase</fullName>
    </alternativeName>
</protein>
<accession>Q7WNY5</accession>
<comment type="function">
    <text evidence="1">Catalyzes the phosphorylation of the position 2 hydroxy group of 4-diphosphocytidyl-2C-methyl-D-erythritol.</text>
</comment>
<comment type="catalytic activity">
    <reaction evidence="1">
        <text>4-CDP-2-C-methyl-D-erythritol + ATP = 4-CDP-2-C-methyl-D-erythritol 2-phosphate + ADP + H(+)</text>
        <dbReference type="Rhea" id="RHEA:18437"/>
        <dbReference type="ChEBI" id="CHEBI:15378"/>
        <dbReference type="ChEBI" id="CHEBI:30616"/>
        <dbReference type="ChEBI" id="CHEBI:57823"/>
        <dbReference type="ChEBI" id="CHEBI:57919"/>
        <dbReference type="ChEBI" id="CHEBI:456216"/>
        <dbReference type="EC" id="2.7.1.148"/>
    </reaction>
</comment>
<comment type="pathway">
    <text evidence="1">Isoprenoid biosynthesis; isopentenyl diphosphate biosynthesis via DXP pathway; isopentenyl diphosphate from 1-deoxy-D-xylulose 5-phosphate: step 3/6.</text>
</comment>
<comment type="similarity">
    <text evidence="1">Belongs to the GHMP kinase family. IspE subfamily.</text>
</comment>
<gene>
    <name evidence="1" type="primary">ispE</name>
    <name type="synonym">ipk</name>
    <name type="ordered locus">BB0900</name>
</gene>
<evidence type="ECO:0000255" key="1">
    <source>
        <dbReference type="HAMAP-Rule" id="MF_00061"/>
    </source>
</evidence>
<sequence length="299" mass="31897">MTLYDVPAPAKLNLFLHVVGRRADGYHLLQTAFRFIDLADTLHFEARADGAIGRAYELPGVAESDDLVVRAARSLQRATGTRQGAQIGLHKRIPQGGGLGGGSSDAATTLIALNRLWGTGLSRSQLMQLALPLGADVPVFVFGQSAFAQGVGEDLTAVALPPAAYLVVQPDAGVPTAAIFSDPDLTRDCASVTIADFLALPTFCFGRNDLEPVVLRRYPEVSGAVRWLFEHGLRVRMSGSGACLFAEFPTLPEAVLAQEEITATMRVAGKTTSHTHPGFRLVQASTGLTEHPLRNWIAS</sequence>
<proteinExistence type="inferred from homology"/>
<name>ISPE_BORBR</name>
<feature type="chain" id="PRO_0000189191" description="4-diphosphocytidyl-2-C-methyl-D-erythritol kinase">
    <location>
        <begin position="1"/>
        <end position="299"/>
    </location>
</feature>
<feature type="active site" evidence="1">
    <location>
        <position position="11"/>
    </location>
</feature>
<feature type="active site" evidence="1">
    <location>
        <position position="136"/>
    </location>
</feature>
<feature type="binding site" evidence="1">
    <location>
        <begin position="94"/>
        <end position="104"/>
    </location>
    <ligand>
        <name>ATP</name>
        <dbReference type="ChEBI" id="CHEBI:30616"/>
    </ligand>
</feature>
<dbReference type="EC" id="2.7.1.148" evidence="1"/>
<dbReference type="EMBL" id="BX640439">
    <property type="protein sequence ID" value="CAE31399.1"/>
    <property type="molecule type" value="Genomic_DNA"/>
</dbReference>
<dbReference type="RefSeq" id="WP_010925980.1">
    <property type="nucleotide sequence ID" value="NC_002927.3"/>
</dbReference>
<dbReference type="SMR" id="Q7WNY5"/>
<dbReference type="KEGG" id="bbr:BB0900"/>
<dbReference type="eggNOG" id="COG1947">
    <property type="taxonomic scope" value="Bacteria"/>
</dbReference>
<dbReference type="HOGENOM" id="CLU_053057_3_0_4"/>
<dbReference type="UniPathway" id="UPA00056">
    <property type="reaction ID" value="UER00094"/>
</dbReference>
<dbReference type="Proteomes" id="UP000001027">
    <property type="component" value="Chromosome"/>
</dbReference>
<dbReference type="GO" id="GO:0050515">
    <property type="term" value="F:4-(cytidine 5'-diphospho)-2-C-methyl-D-erythritol kinase activity"/>
    <property type="evidence" value="ECO:0007669"/>
    <property type="project" value="UniProtKB-UniRule"/>
</dbReference>
<dbReference type="GO" id="GO:0005524">
    <property type="term" value="F:ATP binding"/>
    <property type="evidence" value="ECO:0007669"/>
    <property type="project" value="UniProtKB-UniRule"/>
</dbReference>
<dbReference type="GO" id="GO:0019288">
    <property type="term" value="P:isopentenyl diphosphate biosynthetic process, methylerythritol 4-phosphate pathway"/>
    <property type="evidence" value="ECO:0007669"/>
    <property type="project" value="UniProtKB-UniRule"/>
</dbReference>
<dbReference type="GO" id="GO:0016114">
    <property type="term" value="P:terpenoid biosynthetic process"/>
    <property type="evidence" value="ECO:0007669"/>
    <property type="project" value="InterPro"/>
</dbReference>
<dbReference type="Gene3D" id="3.30.230.10">
    <property type="match status" value="1"/>
</dbReference>
<dbReference type="Gene3D" id="3.30.70.890">
    <property type="entry name" value="GHMP kinase, C-terminal domain"/>
    <property type="match status" value="1"/>
</dbReference>
<dbReference type="HAMAP" id="MF_00061">
    <property type="entry name" value="IspE"/>
    <property type="match status" value="1"/>
</dbReference>
<dbReference type="InterPro" id="IPR013750">
    <property type="entry name" value="GHMP_kinase_C_dom"/>
</dbReference>
<dbReference type="InterPro" id="IPR036554">
    <property type="entry name" value="GHMP_kinase_C_sf"/>
</dbReference>
<dbReference type="InterPro" id="IPR006204">
    <property type="entry name" value="GHMP_kinase_N_dom"/>
</dbReference>
<dbReference type="InterPro" id="IPR004424">
    <property type="entry name" value="IspE"/>
</dbReference>
<dbReference type="InterPro" id="IPR020568">
    <property type="entry name" value="Ribosomal_Su5_D2-typ_SF"/>
</dbReference>
<dbReference type="InterPro" id="IPR014721">
    <property type="entry name" value="Ribsml_uS5_D2-typ_fold_subgr"/>
</dbReference>
<dbReference type="NCBIfam" id="TIGR00154">
    <property type="entry name" value="ispE"/>
    <property type="match status" value="1"/>
</dbReference>
<dbReference type="PANTHER" id="PTHR43527">
    <property type="entry name" value="4-DIPHOSPHOCYTIDYL-2-C-METHYL-D-ERYTHRITOL KINASE, CHLOROPLASTIC"/>
    <property type="match status" value="1"/>
</dbReference>
<dbReference type="PANTHER" id="PTHR43527:SF2">
    <property type="entry name" value="4-DIPHOSPHOCYTIDYL-2-C-METHYL-D-ERYTHRITOL KINASE, CHLOROPLASTIC"/>
    <property type="match status" value="1"/>
</dbReference>
<dbReference type="Pfam" id="PF08544">
    <property type="entry name" value="GHMP_kinases_C"/>
    <property type="match status" value="1"/>
</dbReference>
<dbReference type="Pfam" id="PF00288">
    <property type="entry name" value="GHMP_kinases_N"/>
    <property type="match status" value="1"/>
</dbReference>
<dbReference type="PIRSF" id="PIRSF010376">
    <property type="entry name" value="IspE"/>
    <property type="match status" value="1"/>
</dbReference>
<dbReference type="SUPFAM" id="SSF55060">
    <property type="entry name" value="GHMP Kinase, C-terminal domain"/>
    <property type="match status" value="1"/>
</dbReference>
<dbReference type="SUPFAM" id="SSF54211">
    <property type="entry name" value="Ribosomal protein S5 domain 2-like"/>
    <property type="match status" value="1"/>
</dbReference>